<gene>
    <name type="primary">rpl35</name>
</gene>
<keyword id="KW-0963">Cytoplasm</keyword>
<keyword id="KW-0687">Ribonucleoprotein</keyword>
<keyword id="KW-0689">Ribosomal protein</keyword>
<dbReference type="EMBL" id="AF401589">
    <property type="protein sequence ID" value="AAK95161.1"/>
    <property type="molecule type" value="mRNA"/>
</dbReference>
<dbReference type="RefSeq" id="NP_001187058.1">
    <property type="nucleotide sequence ID" value="NM_001200129.1"/>
</dbReference>
<dbReference type="SMR" id="Q90YT4"/>
<dbReference type="STRING" id="7998.ENSIPUP00000033023"/>
<dbReference type="GeneID" id="100304547"/>
<dbReference type="KEGG" id="ipu:100304547"/>
<dbReference type="CTD" id="11224"/>
<dbReference type="OrthoDB" id="528635at2759"/>
<dbReference type="Proteomes" id="UP000221080">
    <property type="component" value="Chromosome 18"/>
</dbReference>
<dbReference type="GO" id="GO:0022625">
    <property type="term" value="C:cytosolic large ribosomal subunit"/>
    <property type="evidence" value="ECO:0007669"/>
    <property type="project" value="InterPro"/>
</dbReference>
<dbReference type="GO" id="GO:0003729">
    <property type="term" value="F:mRNA binding"/>
    <property type="evidence" value="ECO:0007669"/>
    <property type="project" value="TreeGrafter"/>
</dbReference>
<dbReference type="GO" id="GO:0003735">
    <property type="term" value="F:structural constituent of ribosome"/>
    <property type="evidence" value="ECO:0007669"/>
    <property type="project" value="InterPro"/>
</dbReference>
<dbReference type="GO" id="GO:0000463">
    <property type="term" value="P:maturation of LSU-rRNA from tricistronic rRNA transcript (SSU-rRNA, 5.8S rRNA, LSU-rRNA)"/>
    <property type="evidence" value="ECO:0007669"/>
    <property type="project" value="InterPro"/>
</dbReference>
<dbReference type="GO" id="GO:0006412">
    <property type="term" value="P:translation"/>
    <property type="evidence" value="ECO:0007669"/>
    <property type="project" value="InterPro"/>
</dbReference>
<dbReference type="CDD" id="cd00427">
    <property type="entry name" value="Ribosomal_L29_HIP"/>
    <property type="match status" value="1"/>
</dbReference>
<dbReference type="FunFam" id="1.10.287.310:FF:000002">
    <property type="entry name" value="60S ribosomal protein L35"/>
    <property type="match status" value="1"/>
</dbReference>
<dbReference type="FunFam" id="6.10.250.3450:FF:000001">
    <property type="entry name" value="60S ribosomal protein L35"/>
    <property type="match status" value="1"/>
</dbReference>
<dbReference type="Gene3D" id="1.10.287.310">
    <property type="match status" value="1"/>
</dbReference>
<dbReference type="Gene3D" id="6.10.250.3450">
    <property type="match status" value="1"/>
</dbReference>
<dbReference type="HAMAP" id="MF_00374">
    <property type="entry name" value="Ribosomal_uL29"/>
    <property type="match status" value="1"/>
</dbReference>
<dbReference type="InterPro" id="IPR001854">
    <property type="entry name" value="Ribosomal_uL29"/>
</dbReference>
<dbReference type="InterPro" id="IPR018254">
    <property type="entry name" value="Ribosomal_uL29_CS"/>
</dbReference>
<dbReference type="InterPro" id="IPR045059">
    <property type="entry name" value="Ribosomal_uL29_euk"/>
</dbReference>
<dbReference type="InterPro" id="IPR036049">
    <property type="entry name" value="Ribosomal_uL29_sf"/>
</dbReference>
<dbReference type="NCBIfam" id="TIGR00012">
    <property type="entry name" value="L29"/>
    <property type="match status" value="1"/>
</dbReference>
<dbReference type="PANTHER" id="PTHR45722">
    <property type="entry name" value="60S RIBOSOMAL PROTEIN L35"/>
    <property type="match status" value="1"/>
</dbReference>
<dbReference type="PANTHER" id="PTHR45722:SF2">
    <property type="entry name" value="LARGE RIBOSOMAL SUBUNIT PROTEIN UL29-RELATED"/>
    <property type="match status" value="1"/>
</dbReference>
<dbReference type="Pfam" id="PF00831">
    <property type="entry name" value="Ribosomal_L29"/>
    <property type="match status" value="1"/>
</dbReference>
<dbReference type="SUPFAM" id="SSF46561">
    <property type="entry name" value="Ribosomal protein L29 (L29p)"/>
    <property type="match status" value="1"/>
</dbReference>
<dbReference type="PROSITE" id="PS00579">
    <property type="entry name" value="RIBOSOMAL_L29"/>
    <property type="match status" value="1"/>
</dbReference>
<sequence length="123" mass="14441">MAKIKARDLRGKKKEELLKHVDDLKVELSQLRVAKVTGGAASKLSKIRVVRKSIARVLTVINQTQKENLRKFYKGKKYKPLDLRPRKTRAIRRQLTKHEQGLMTKKMQRRSRLYSMRKFAVKA</sequence>
<name>RL35_ICTPU</name>
<evidence type="ECO:0000250" key="1">
    <source>
        <dbReference type="UniProtKB" id="P42766"/>
    </source>
</evidence>
<evidence type="ECO:0000305" key="2"/>
<protein>
    <recommendedName>
        <fullName evidence="2">Large ribosomal subunit protein uL29</fullName>
    </recommendedName>
    <alternativeName>
        <fullName>60S ribosomal protein L35</fullName>
    </alternativeName>
</protein>
<feature type="chain" id="PRO_0000130539" description="Large ribosomal subunit protein uL29">
    <location>
        <begin position="1"/>
        <end position="123"/>
    </location>
</feature>
<comment type="function">
    <text evidence="1">Component of the large ribosomal subunit. The ribosome is a large ribonucleoprotein complex responsible for the synthesis of proteins in the cell.</text>
</comment>
<comment type="subunit">
    <text evidence="1">Component of the large ribosomal subunit.</text>
</comment>
<comment type="subcellular location">
    <subcellularLocation>
        <location evidence="1">Cytoplasm</location>
    </subcellularLocation>
</comment>
<comment type="similarity">
    <text evidence="2">Belongs to the universal ribosomal protein uL29 family.</text>
</comment>
<accession>Q90YT4</accession>
<reference key="1">
    <citation type="journal article" date="2003" name="Gene">
        <title>Translational machinery of channel catfish: II. Complementary DNA and expression of the complete set of 47 60S ribosomal proteins.</title>
        <authorList>
            <person name="Patterson A.P."/>
            <person name="Karsi A."/>
            <person name="Feng J."/>
            <person name="Liu Z.J."/>
        </authorList>
    </citation>
    <scope>NUCLEOTIDE SEQUENCE [MRNA]</scope>
</reference>
<proteinExistence type="evidence at transcript level"/>
<organism>
    <name type="scientific">Ictalurus punctatus</name>
    <name type="common">Channel catfish</name>
    <name type="synonym">Silurus punctatus</name>
    <dbReference type="NCBI Taxonomy" id="7998"/>
    <lineage>
        <taxon>Eukaryota</taxon>
        <taxon>Metazoa</taxon>
        <taxon>Chordata</taxon>
        <taxon>Craniata</taxon>
        <taxon>Vertebrata</taxon>
        <taxon>Euteleostomi</taxon>
        <taxon>Actinopterygii</taxon>
        <taxon>Neopterygii</taxon>
        <taxon>Teleostei</taxon>
        <taxon>Ostariophysi</taxon>
        <taxon>Siluriformes</taxon>
        <taxon>Ictaluridae</taxon>
        <taxon>Ictalurus</taxon>
    </lineage>
</organism>